<accession>P61996</accession>
<accession>P20297</accession>
<feature type="chain" id="PRO_0000184782" description="Putative type 4B encapsulin shell protein PF1875">
    <location>
        <begin position="1"/>
        <end position="99"/>
    </location>
</feature>
<gene>
    <name type="ordered locus">PF1875</name>
</gene>
<evidence type="ECO:0000305" key="1">
    <source>
    </source>
</evidence>
<keyword id="KW-1284">Encapsulin nanocompartment</keyword>
<keyword id="KW-1185">Reference proteome</keyword>
<organism>
    <name type="scientific">Pyrococcus furiosus (strain ATCC 43587 / DSM 3638 / JCM 8422 / Vc1)</name>
    <dbReference type="NCBI Taxonomy" id="186497"/>
    <lineage>
        <taxon>Archaea</taxon>
        <taxon>Methanobacteriati</taxon>
        <taxon>Methanobacteriota</taxon>
        <taxon>Thermococci</taxon>
        <taxon>Thermococcales</taxon>
        <taxon>Thermococcaceae</taxon>
        <taxon>Pyrococcus</taxon>
    </lineage>
</organism>
<reference key="1">
    <citation type="journal article" date="1999" name="Genetics">
        <title>Divergence of the hyperthermophilic archaea Pyrococcus furiosus and P. horikoshii inferred from complete genomic sequences.</title>
        <authorList>
            <person name="Maeder D.L."/>
            <person name="Weiss R.B."/>
            <person name="Dunn D.M."/>
            <person name="Cherry J.L."/>
            <person name="Gonzalez J.M."/>
            <person name="DiRuggiero J."/>
            <person name="Robb F.T."/>
        </authorList>
    </citation>
    <scope>NUCLEOTIDE SEQUENCE [LARGE SCALE GENOMIC DNA]</scope>
    <source>
        <strain>ATCC 43587 / DSM 3638 / JCM 8422 / Vc1</strain>
    </source>
</reference>
<reference key="2">
    <citation type="journal article" date="2021" name="Nat. Commun.">
        <title>Large-scale computational discovery and analysis of virus-derived microbial nanocompartments.</title>
        <authorList>
            <person name="Andreas M.P."/>
            <person name="Giessen T.W."/>
        </authorList>
    </citation>
    <scope>PUTATIVE FUNCTION</scope>
    <scope>SUBUNIT</scope>
    <scope>PUTATIVE SUBCELLULAR LOCATION</scope>
    <scope>CLASSIFICATION</scope>
</reference>
<name>ENCP4_PYRFU</name>
<proteinExistence type="evidence at protein level"/>
<protein>
    <recommendedName>
        <fullName evidence="1">Putative type 4B encapsulin shell protein PF1875</fullName>
    </recommendedName>
</protein>
<comment type="function">
    <text evidence="1">May be the encapsulin shell protein in a type 4 A-domain encapsulin nanocompartment system. Its cargo may be upstream glyceraldehyde-3-phosphate dehydrogenase (AC P61879).</text>
</comment>
<comment type="subunit">
    <text evidence="1">May self-assemble into facets and potentially into larger complexes.</text>
</comment>
<comment type="subcellular location">
    <subcellularLocation>
        <location evidence="1">Encapsulin nanocompartment</location>
    </subcellularLocation>
</comment>
<comment type="similarity">
    <text evidence="1">Belongs to the encapsulin family. Family 4B subfamily.</text>
</comment>
<sequence length="99" mass="11386">MENNNIMSQVKEIIEAAIKELEDDGFEPDIILAGPIFIRYLPEDVRLKVYEIEELGSDAIIADSKYLGQIKKAAKRISIDPLLQEKEWEKIIEEIPTQE</sequence>
<dbReference type="EMBL" id="AE009950">
    <property type="protein sequence ID" value="AAL81999.1"/>
    <property type="molecule type" value="Genomic_DNA"/>
</dbReference>
<dbReference type="RefSeq" id="WP_011013014.1">
    <property type="nucleotide sequence ID" value="NZ_CP023154.1"/>
</dbReference>
<dbReference type="SMR" id="P61996"/>
<dbReference type="STRING" id="186497.PF1875"/>
<dbReference type="TCDB" id="1.S.11.1.1">
    <property type="family name" value="the bacterial/archaeal nanocompartment encapsulin shell protein6 (banc-sp6) family"/>
</dbReference>
<dbReference type="PaxDb" id="186497-PF1875"/>
<dbReference type="KEGG" id="pfu:PF1875"/>
<dbReference type="PATRIC" id="fig|186497.12.peg.1946"/>
<dbReference type="eggNOG" id="arCOG03806">
    <property type="taxonomic scope" value="Archaea"/>
</dbReference>
<dbReference type="HOGENOM" id="CLU_158400_0_0_2"/>
<dbReference type="OrthoDB" id="86177at2157"/>
<dbReference type="PhylomeDB" id="P61996"/>
<dbReference type="Proteomes" id="UP000001013">
    <property type="component" value="Chromosome"/>
</dbReference>
<dbReference type="GO" id="GO:0140737">
    <property type="term" value="C:encapsulin nanocompartment"/>
    <property type="evidence" value="ECO:0000314"/>
    <property type="project" value="UniProtKB"/>
</dbReference>
<dbReference type="Gene3D" id="3.30.2320.10">
    <property type="entry name" value="hypothetical protein PF0899 domain"/>
    <property type="match status" value="1"/>
</dbReference>
<dbReference type="InterPro" id="IPR014418">
    <property type="entry name" value="ENCP4"/>
</dbReference>
<dbReference type="InterPro" id="IPR036216">
    <property type="entry name" value="ENCP4_sf"/>
</dbReference>
<dbReference type="NCBIfam" id="NF041191">
    <property type="entry name" value="encap_f4b"/>
    <property type="match status" value="1"/>
</dbReference>
<dbReference type="Pfam" id="PF08967">
    <property type="entry name" value="ENCP4"/>
    <property type="match status" value="1"/>
</dbReference>
<dbReference type="PIRSF" id="PIRSF004604">
    <property type="entry name" value="UCP004604"/>
    <property type="match status" value="1"/>
</dbReference>
<dbReference type="SUPFAM" id="SSF111057">
    <property type="entry name" value="Hypothetical protein PF0899"/>
    <property type="match status" value="1"/>
</dbReference>